<dbReference type="EMBL" id="CP001063">
    <property type="protein sequence ID" value="ACD07958.1"/>
    <property type="molecule type" value="Genomic_DNA"/>
</dbReference>
<dbReference type="RefSeq" id="WP_001383696.1">
    <property type="nucleotide sequence ID" value="NC_010658.1"/>
</dbReference>
<dbReference type="SMR" id="B2TXT6"/>
<dbReference type="STRING" id="344609.SbBS512_E2886"/>
<dbReference type="KEGG" id="sbc:SbBS512_E2886"/>
<dbReference type="HOGENOM" id="CLU_016077_6_2_6"/>
<dbReference type="Proteomes" id="UP000001030">
    <property type="component" value="Chromosome"/>
</dbReference>
<dbReference type="GO" id="GO:0005525">
    <property type="term" value="F:GTP binding"/>
    <property type="evidence" value="ECO:0007669"/>
    <property type="project" value="UniProtKB-UniRule"/>
</dbReference>
<dbReference type="GO" id="GO:0043022">
    <property type="term" value="F:ribosome binding"/>
    <property type="evidence" value="ECO:0007669"/>
    <property type="project" value="TreeGrafter"/>
</dbReference>
<dbReference type="GO" id="GO:0042254">
    <property type="term" value="P:ribosome biogenesis"/>
    <property type="evidence" value="ECO:0007669"/>
    <property type="project" value="UniProtKB-KW"/>
</dbReference>
<dbReference type="CDD" id="cd01894">
    <property type="entry name" value="EngA1"/>
    <property type="match status" value="1"/>
</dbReference>
<dbReference type="CDD" id="cd01895">
    <property type="entry name" value="EngA2"/>
    <property type="match status" value="1"/>
</dbReference>
<dbReference type="FunFam" id="3.30.300.20:FF:000004">
    <property type="entry name" value="GTPase Der"/>
    <property type="match status" value="1"/>
</dbReference>
<dbReference type="FunFam" id="3.40.50.300:FF:000040">
    <property type="entry name" value="GTPase Der"/>
    <property type="match status" value="1"/>
</dbReference>
<dbReference type="FunFam" id="3.40.50.300:FF:000057">
    <property type="entry name" value="GTPase Der"/>
    <property type="match status" value="1"/>
</dbReference>
<dbReference type="Gene3D" id="3.30.300.20">
    <property type="match status" value="1"/>
</dbReference>
<dbReference type="Gene3D" id="3.40.50.300">
    <property type="entry name" value="P-loop containing nucleotide triphosphate hydrolases"/>
    <property type="match status" value="2"/>
</dbReference>
<dbReference type="HAMAP" id="MF_00195">
    <property type="entry name" value="GTPase_Der"/>
    <property type="match status" value="1"/>
</dbReference>
<dbReference type="InterPro" id="IPR031166">
    <property type="entry name" value="G_ENGA"/>
</dbReference>
<dbReference type="InterPro" id="IPR006073">
    <property type="entry name" value="GTP-bd"/>
</dbReference>
<dbReference type="InterPro" id="IPR016484">
    <property type="entry name" value="GTPase_Der"/>
</dbReference>
<dbReference type="InterPro" id="IPR032859">
    <property type="entry name" value="KH_dom-like"/>
</dbReference>
<dbReference type="InterPro" id="IPR015946">
    <property type="entry name" value="KH_dom-like_a/b"/>
</dbReference>
<dbReference type="InterPro" id="IPR027417">
    <property type="entry name" value="P-loop_NTPase"/>
</dbReference>
<dbReference type="InterPro" id="IPR005225">
    <property type="entry name" value="Small_GTP-bd"/>
</dbReference>
<dbReference type="NCBIfam" id="TIGR03594">
    <property type="entry name" value="GTPase_EngA"/>
    <property type="match status" value="1"/>
</dbReference>
<dbReference type="NCBIfam" id="TIGR00231">
    <property type="entry name" value="small_GTP"/>
    <property type="match status" value="2"/>
</dbReference>
<dbReference type="PANTHER" id="PTHR43834">
    <property type="entry name" value="GTPASE DER"/>
    <property type="match status" value="1"/>
</dbReference>
<dbReference type="PANTHER" id="PTHR43834:SF6">
    <property type="entry name" value="GTPASE DER"/>
    <property type="match status" value="1"/>
</dbReference>
<dbReference type="Pfam" id="PF14714">
    <property type="entry name" value="KH_dom-like"/>
    <property type="match status" value="1"/>
</dbReference>
<dbReference type="Pfam" id="PF01926">
    <property type="entry name" value="MMR_HSR1"/>
    <property type="match status" value="2"/>
</dbReference>
<dbReference type="PIRSF" id="PIRSF006485">
    <property type="entry name" value="GTP-binding_EngA"/>
    <property type="match status" value="1"/>
</dbReference>
<dbReference type="PRINTS" id="PR00326">
    <property type="entry name" value="GTP1OBG"/>
</dbReference>
<dbReference type="SUPFAM" id="SSF52540">
    <property type="entry name" value="P-loop containing nucleoside triphosphate hydrolases"/>
    <property type="match status" value="2"/>
</dbReference>
<dbReference type="PROSITE" id="PS51712">
    <property type="entry name" value="G_ENGA"/>
    <property type="match status" value="2"/>
</dbReference>
<reference key="1">
    <citation type="submission" date="2008-05" db="EMBL/GenBank/DDBJ databases">
        <title>Complete sequence of Shigella boydii serotype 18 strain BS512.</title>
        <authorList>
            <person name="Rasko D.A."/>
            <person name="Rosovitz M."/>
            <person name="Maurelli A.T."/>
            <person name="Myers G."/>
            <person name="Seshadri R."/>
            <person name="Cer R."/>
            <person name="Jiang L."/>
            <person name="Ravel J."/>
            <person name="Sebastian Y."/>
        </authorList>
    </citation>
    <scope>NUCLEOTIDE SEQUENCE [LARGE SCALE GENOMIC DNA]</scope>
    <source>
        <strain>CDC 3083-94 / BS512</strain>
    </source>
</reference>
<protein>
    <recommendedName>
        <fullName evidence="1">GTPase Der</fullName>
    </recommendedName>
    <alternativeName>
        <fullName evidence="1">GTP-binding protein EngA</fullName>
    </alternativeName>
</protein>
<accession>B2TXT6</accession>
<name>DER_SHIB3</name>
<gene>
    <name evidence="1" type="primary">der</name>
    <name type="synonym">engA</name>
    <name type="ordered locus">SbBS512_E2886</name>
</gene>
<sequence length="490" mass="55048">MVPVVALVGRPNVGKSTLFNRLTRTRDALVADFPGLTRDRKYGRAEIEGREFICIDTGGIDGTEDGVETRMAEQSLLAIEEADVVLFMVDARAGLMPADEAIAKHLRSREKPTFLVANKIDGLDPDQAVVDFYSLGLGEIYPIAASHGRGVLSLLEHVLLPWMEDLAPQEEVDEDAEYWAQFEAEENGEEEEEDDFDPQSLPIKLAIVGRPNVGKSTLTNRILGEERVVVYDMPGTTRDSIYIPMERDGREYVLIDTAGVRKRGKITDAVEKFSVIKTLQAIEDANVVMLVIDAREGISDQDLSLLGFILNSGRSLVIVVNKWDGLSQEVKEQVKETLDFRLGFIDFARVHFISALHGSGVGNLFESVREAYDSSTRRVGTSMLTRIMTMAVEDHQPPLVRGRRVKLKYAHAGGYNPPIVVIHGNQVKDLPDSYKRYLMNYFRKSLDVMGSPIRIQFKEGENPYANKRNTLTPTQMRKRKRLMKHIKKNK</sequence>
<evidence type="ECO:0000255" key="1">
    <source>
        <dbReference type="HAMAP-Rule" id="MF_00195"/>
    </source>
</evidence>
<organism>
    <name type="scientific">Shigella boydii serotype 18 (strain CDC 3083-94 / BS512)</name>
    <dbReference type="NCBI Taxonomy" id="344609"/>
    <lineage>
        <taxon>Bacteria</taxon>
        <taxon>Pseudomonadati</taxon>
        <taxon>Pseudomonadota</taxon>
        <taxon>Gammaproteobacteria</taxon>
        <taxon>Enterobacterales</taxon>
        <taxon>Enterobacteriaceae</taxon>
        <taxon>Shigella</taxon>
    </lineage>
</organism>
<proteinExistence type="inferred from homology"/>
<comment type="function">
    <text evidence="1">GTPase that plays an essential role in the late steps of ribosome biogenesis.</text>
</comment>
<comment type="subunit">
    <text evidence="1">Associates with the 50S ribosomal subunit.</text>
</comment>
<comment type="similarity">
    <text evidence="1">Belongs to the TRAFAC class TrmE-Era-EngA-EngB-Septin-like GTPase superfamily. EngA (Der) GTPase family.</text>
</comment>
<feature type="chain" id="PRO_1000099161" description="GTPase Der">
    <location>
        <begin position="1"/>
        <end position="490"/>
    </location>
</feature>
<feature type="domain" description="EngA-type G 1">
    <location>
        <begin position="3"/>
        <end position="166"/>
    </location>
</feature>
<feature type="domain" description="EngA-type G 2">
    <location>
        <begin position="203"/>
        <end position="376"/>
    </location>
</feature>
<feature type="domain" description="KH-like" evidence="1">
    <location>
        <begin position="377"/>
        <end position="461"/>
    </location>
</feature>
<feature type="binding site" evidence="1">
    <location>
        <begin position="9"/>
        <end position="16"/>
    </location>
    <ligand>
        <name>GTP</name>
        <dbReference type="ChEBI" id="CHEBI:37565"/>
        <label>1</label>
    </ligand>
</feature>
<feature type="binding site" evidence="1">
    <location>
        <begin position="56"/>
        <end position="60"/>
    </location>
    <ligand>
        <name>GTP</name>
        <dbReference type="ChEBI" id="CHEBI:37565"/>
        <label>1</label>
    </ligand>
</feature>
<feature type="binding site" evidence="1">
    <location>
        <begin position="118"/>
        <end position="121"/>
    </location>
    <ligand>
        <name>GTP</name>
        <dbReference type="ChEBI" id="CHEBI:37565"/>
        <label>1</label>
    </ligand>
</feature>
<feature type="binding site" evidence="1">
    <location>
        <begin position="209"/>
        <end position="216"/>
    </location>
    <ligand>
        <name>GTP</name>
        <dbReference type="ChEBI" id="CHEBI:37565"/>
        <label>2</label>
    </ligand>
</feature>
<feature type="binding site" evidence="1">
    <location>
        <begin position="256"/>
        <end position="260"/>
    </location>
    <ligand>
        <name>GTP</name>
        <dbReference type="ChEBI" id="CHEBI:37565"/>
        <label>2</label>
    </ligand>
</feature>
<feature type="binding site" evidence="1">
    <location>
        <begin position="321"/>
        <end position="324"/>
    </location>
    <ligand>
        <name>GTP</name>
        <dbReference type="ChEBI" id="CHEBI:37565"/>
        <label>2</label>
    </ligand>
</feature>
<keyword id="KW-0342">GTP-binding</keyword>
<keyword id="KW-0547">Nucleotide-binding</keyword>
<keyword id="KW-1185">Reference proteome</keyword>
<keyword id="KW-0677">Repeat</keyword>
<keyword id="KW-0690">Ribosome biogenesis</keyword>